<accession>Q4IJ11</accession>
<accession>A0A0E0S1U6</accession>
<accession>V6R974</accession>
<sequence>MSERDSPVGEHTKEPVNDGQEQEYEDAVAAADSDHDSDALSEVDEDQFEDYDPETANIEDRPVDIDEDVARTLKATKRKRTEGEAPKKPREGRRDKKRRDRDEDVEMDDAEDGSKKSRRSRRVAVDGERRQKSKAATPEPENEDHLSPEERRKRAIDRALDAAIKKPSGQKRKKKDEIDLEAEIDDLLADLKVRMEGACQSDNQAREAGQPALHKLKLLPEVTAIMNRNNVQHEVLDPDTNFLQHVKFFLEPLNDGSLPAYNIQRDIFNALAKMNIEKEALLSSGIGKVVVFYTRSKKPEPSIKRIAQRLLGEWSRPILNRTDDYKKRQIETRDYDYDAAKMAQRQKTNSQFSLSQRPAPNTKEAERERLLAPSRGNNSARMVNLPSSYTVAPQSTFMGSQGSGHRPLGAGGMEAFRKMTQKSKKRAN</sequence>
<proteinExistence type="inferred from homology"/>
<feature type="chain" id="PRO_0000083360" description="Transcription factor IWS1">
    <location>
        <begin position="1"/>
        <end position="428"/>
    </location>
</feature>
<feature type="domain" description="TFIIS N-terminal" evidence="2">
    <location>
        <begin position="244"/>
        <end position="321"/>
    </location>
</feature>
<feature type="region of interest" description="Disordered" evidence="3">
    <location>
        <begin position="1"/>
        <end position="151"/>
    </location>
</feature>
<feature type="region of interest" description="Disordered" evidence="3">
    <location>
        <begin position="346"/>
        <end position="381"/>
    </location>
</feature>
<feature type="region of interest" description="Disordered" evidence="3">
    <location>
        <begin position="393"/>
        <end position="412"/>
    </location>
</feature>
<feature type="compositionally biased region" description="Basic and acidic residues" evidence="3">
    <location>
        <begin position="1"/>
        <end position="16"/>
    </location>
</feature>
<feature type="compositionally biased region" description="Acidic residues" evidence="3">
    <location>
        <begin position="39"/>
        <end position="53"/>
    </location>
</feature>
<feature type="compositionally biased region" description="Basic and acidic residues" evidence="3">
    <location>
        <begin position="58"/>
        <end position="71"/>
    </location>
</feature>
<feature type="compositionally biased region" description="Basic and acidic residues" evidence="3">
    <location>
        <begin position="81"/>
        <end position="94"/>
    </location>
</feature>
<feature type="compositionally biased region" description="Polar residues" evidence="3">
    <location>
        <begin position="346"/>
        <end position="359"/>
    </location>
</feature>
<evidence type="ECO:0000250" key="1"/>
<evidence type="ECO:0000255" key="2">
    <source>
        <dbReference type="PROSITE-ProRule" id="PRU00649"/>
    </source>
</evidence>
<evidence type="ECO:0000256" key="3">
    <source>
        <dbReference type="SAM" id="MobiDB-lite"/>
    </source>
</evidence>
<evidence type="ECO:0000305" key="4"/>
<protein>
    <recommendedName>
        <fullName>Transcription factor IWS1</fullName>
    </recommendedName>
</protein>
<comment type="function">
    <text evidence="1">Transcription factor involved in RNA polymerase II transcription regulation. May function in both SPT15/TBP post-recruitment and recruitment steps of transcription (By similarity).</text>
</comment>
<comment type="subcellular location">
    <subcellularLocation>
        <location evidence="2">Nucleus</location>
    </subcellularLocation>
</comment>
<comment type="similarity">
    <text evidence="4">Belongs to the IWS1 family.</text>
</comment>
<reference key="1">
    <citation type="journal article" date="2007" name="Science">
        <title>The Fusarium graminearum genome reveals a link between localized polymorphism and pathogen specialization.</title>
        <authorList>
            <person name="Cuomo C.A."/>
            <person name="Gueldener U."/>
            <person name="Xu J.-R."/>
            <person name="Trail F."/>
            <person name="Turgeon B.G."/>
            <person name="Di Pietro A."/>
            <person name="Walton J.D."/>
            <person name="Ma L.-J."/>
            <person name="Baker S.E."/>
            <person name="Rep M."/>
            <person name="Adam G."/>
            <person name="Antoniw J."/>
            <person name="Baldwin T."/>
            <person name="Calvo S.E."/>
            <person name="Chang Y.-L."/>
            <person name="DeCaprio D."/>
            <person name="Gale L.R."/>
            <person name="Gnerre S."/>
            <person name="Goswami R.S."/>
            <person name="Hammond-Kosack K."/>
            <person name="Harris L.J."/>
            <person name="Hilburn K."/>
            <person name="Kennell J.C."/>
            <person name="Kroken S."/>
            <person name="Magnuson J.K."/>
            <person name="Mannhaupt G."/>
            <person name="Mauceli E.W."/>
            <person name="Mewes H.-W."/>
            <person name="Mitterbauer R."/>
            <person name="Muehlbauer G."/>
            <person name="Muensterkoetter M."/>
            <person name="Nelson D."/>
            <person name="O'Donnell K."/>
            <person name="Ouellet T."/>
            <person name="Qi W."/>
            <person name="Quesneville H."/>
            <person name="Roncero M.I.G."/>
            <person name="Seong K.-Y."/>
            <person name="Tetko I.V."/>
            <person name="Urban M."/>
            <person name="Waalwijk C."/>
            <person name="Ward T.J."/>
            <person name="Yao J."/>
            <person name="Birren B.W."/>
            <person name="Kistler H.C."/>
        </authorList>
    </citation>
    <scope>NUCLEOTIDE SEQUENCE [LARGE SCALE GENOMIC DNA]</scope>
    <source>
        <strain>ATCC MYA-4620 / CBS 123657 / FGSC 9075 / NRRL 31084 / PH-1</strain>
    </source>
</reference>
<reference key="2">
    <citation type="journal article" date="2010" name="Nature">
        <title>Comparative genomics reveals mobile pathogenicity chromosomes in Fusarium.</title>
        <authorList>
            <person name="Ma L.-J."/>
            <person name="van der Does H.C."/>
            <person name="Borkovich K.A."/>
            <person name="Coleman J.J."/>
            <person name="Daboussi M.-J."/>
            <person name="Di Pietro A."/>
            <person name="Dufresne M."/>
            <person name="Freitag M."/>
            <person name="Grabherr M."/>
            <person name="Henrissat B."/>
            <person name="Houterman P.M."/>
            <person name="Kang S."/>
            <person name="Shim W.-B."/>
            <person name="Woloshuk C."/>
            <person name="Xie X."/>
            <person name="Xu J.-R."/>
            <person name="Antoniw J."/>
            <person name="Baker S.E."/>
            <person name="Bluhm B.H."/>
            <person name="Breakspear A."/>
            <person name="Brown D.W."/>
            <person name="Butchko R.A.E."/>
            <person name="Chapman S."/>
            <person name="Coulson R."/>
            <person name="Coutinho P.M."/>
            <person name="Danchin E.G.J."/>
            <person name="Diener A."/>
            <person name="Gale L.R."/>
            <person name="Gardiner D.M."/>
            <person name="Goff S."/>
            <person name="Hammond-Kosack K.E."/>
            <person name="Hilburn K."/>
            <person name="Hua-Van A."/>
            <person name="Jonkers W."/>
            <person name="Kazan K."/>
            <person name="Kodira C.D."/>
            <person name="Koehrsen M."/>
            <person name="Kumar L."/>
            <person name="Lee Y.-H."/>
            <person name="Li L."/>
            <person name="Manners J.M."/>
            <person name="Miranda-Saavedra D."/>
            <person name="Mukherjee M."/>
            <person name="Park G."/>
            <person name="Park J."/>
            <person name="Park S.-Y."/>
            <person name="Proctor R.H."/>
            <person name="Regev A."/>
            <person name="Ruiz-Roldan M.C."/>
            <person name="Sain D."/>
            <person name="Sakthikumar S."/>
            <person name="Sykes S."/>
            <person name="Schwartz D.C."/>
            <person name="Turgeon B.G."/>
            <person name="Wapinski I."/>
            <person name="Yoder O."/>
            <person name="Young S."/>
            <person name="Zeng Q."/>
            <person name="Zhou S."/>
            <person name="Galagan J."/>
            <person name="Cuomo C.A."/>
            <person name="Kistler H.C."/>
            <person name="Rep M."/>
        </authorList>
    </citation>
    <scope>GENOME REANNOTATION</scope>
    <source>
        <strain>ATCC MYA-4620 / CBS 123657 / FGSC 9075 / NRRL 31084 / PH-1</strain>
    </source>
</reference>
<reference key="3">
    <citation type="journal article" date="2015" name="BMC Genomics">
        <title>The completed genome sequence of the pathogenic ascomycete fungus Fusarium graminearum.</title>
        <authorList>
            <person name="King R."/>
            <person name="Urban M."/>
            <person name="Hammond-Kosack M.C.U."/>
            <person name="Hassani-Pak K."/>
            <person name="Hammond-Kosack K.E."/>
        </authorList>
    </citation>
    <scope>NUCLEOTIDE SEQUENCE [LARGE SCALE GENOMIC DNA]</scope>
    <source>
        <strain>ATCC MYA-4620 / CBS 123657 / FGSC 9075 / NRRL 31084 / PH-1</strain>
    </source>
</reference>
<organism>
    <name type="scientific">Gibberella zeae (strain ATCC MYA-4620 / CBS 123657 / FGSC 9075 / NRRL 31084 / PH-1)</name>
    <name type="common">Wheat head blight fungus</name>
    <name type="synonym">Fusarium graminearum</name>
    <dbReference type="NCBI Taxonomy" id="229533"/>
    <lineage>
        <taxon>Eukaryota</taxon>
        <taxon>Fungi</taxon>
        <taxon>Dikarya</taxon>
        <taxon>Ascomycota</taxon>
        <taxon>Pezizomycotina</taxon>
        <taxon>Sordariomycetes</taxon>
        <taxon>Hypocreomycetidae</taxon>
        <taxon>Hypocreales</taxon>
        <taxon>Nectriaceae</taxon>
        <taxon>Fusarium</taxon>
    </lineage>
</organism>
<name>IWS1_GIBZE</name>
<keyword id="KW-0539">Nucleus</keyword>
<keyword id="KW-1185">Reference proteome</keyword>
<keyword id="KW-0804">Transcription</keyword>
<keyword id="KW-0805">Transcription regulation</keyword>
<dbReference type="EMBL" id="DS231664">
    <property type="protein sequence ID" value="ESU10517.1"/>
    <property type="molecule type" value="Genomic_DNA"/>
</dbReference>
<dbReference type="EMBL" id="HG970333">
    <property type="protein sequence ID" value="CEF77471.1"/>
    <property type="molecule type" value="Genomic_DNA"/>
</dbReference>
<dbReference type="RefSeq" id="XP_011323016.1">
    <property type="nucleotide sequence ID" value="XM_011324714.1"/>
</dbReference>
<dbReference type="SMR" id="Q4IJ11"/>
<dbReference type="FunCoup" id="Q4IJ11">
    <property type="interactions" value="358"/>
</dbReference>
<dbReference type="STRING" id="229533.Q4IJ11"/>
<dbReference type="GeneID" id="23550155"/>
<dbReference type="KEGG" id="fgr:FGSG_02797"/>
<dbReference type="VEuPathDB" id="FungiDB:FGRAMPH1_01G11337"/>
<dbReference type="eggNOG" id="KOG1793">
    <property type="taxonomic scope" value="Eukaryota"/>
</dbReference>
<dbReference type="HOGENOM" id="CLU_045275_1_0_1"/>
<dbReference type="InParanoid" id="Q4IJ11"/>
<dbReference type="OrthoDB" id="125934at110618"/>
<dbReference type="Proteomes" id="UP000070720">
    <property type="component" value="Chromosome 2"/>
</dbReference>
<dbReference type="GO" id="GO:0005634">
    <property type="term" value="C:nucleus"/>
    <property type="evidence" value="ECO:0007669"/>
    <property type="project" value="UniProtKB-SubCell"/>
</dbReference>
<dbReference type="GO" id="GO:0016973">
    <property type="term" value="P:poly(A)+ mRNA export from nucleus"/>
    <property type="evidence" value="ECO:0007669"/>
    <property type="project" value="TreeGrafter"/>
</dbReference>
<dbReference type="FunFam" id="1.20.930.10:FF:000003">
    <property type="entry name" value="Putative Transcription factor IWS1"/>
    <property type="match status" value="1"/>
</dbReference>
<dbReference type="Gene3D" id="1.20.930.10">
    <property type="entry name" value="Conserved domain common to transcription factors TFIIS, elongin A, CRSP70"/>
    <property type="match status" value="1"/>
</dbReference>
<dbReference type="InterPro" id="IPR051037">
    <property type="entry name" value="RNAPII_TF_IWS1"/>
</dbReference>
<dbReference type="InterPro" id="IPR035441">
    <property type="entry name" value="TFIIS/LEDGF_dom_sf"/>
</dbReference>
<dbReference type="InterPro" id="IPR017923">
    <property type="entry name" value="TFIIS_N"/>
</dbReference>
<dbReference type="PANTHER" id="PTHR46010">
    <property type="entry name" value="PROTEIN IWS1 HOMOLOG"/>
    <property type="match status" value="1"/>
</dbReference>
<dbReference type="PANTHER" id="PTHR46010:SF1">
    <property type="entry name" value="PROTEIN IWS1 HOMOLOG"/>
    <property type="match status" value="1"/>
</dbReference>
<dbReference type="Pfam" id="PF08711">
    <property type="entry name" value="Med26"/>
    <property type="match status" value="1"/>
</dbReference>
<dbReference type="SUPFAM" id="SSF47676">
    <property type="entry name" value="Conserved domain common to transcription factors TFIIS, elongin A, CRSP70"/>
    <property type="match status" value="1"/>
</dbReference>
<dbReference type="PROSITE" id="PS51319">
    <property type="entry name" value="TFIIS_N"/>
    <property type="match status" value="1"/>
</dbReference>
<gene>
    <name type="primary">IWS1</name>
    <name type="ORF">FGRRES_02797</name>
    <name type="ORF">FGSG_02797</name>
</gene>